<keyword id="KW-1003">Cell membrane</keyword>
<keyword id="KW-0967">Endosome</keyword>
<keyword id="KW-0342">GTP-binding</keyword>
<keyword id="KW-0449">Lipoprotein</keyword>
<keyword id="KW-0460">Magnesium</keyword>
<keyword id="KW-0472">Membrane</keyword>
<keyword id="KW-0479">Metal-binding</keyword>
<keyword id="KW-0547">Nucleotide-binding</keyword>
<keyword id="KW-0564">Palmitate</keyword>
<keyword id="KW-0597">Phosphoprotein</keyword>
<keyword id="KW-1267">Proteomics identification</keyword>
<keyword id="KW-1185">Reference proteome</keyword>
<reference evidence="6 10" key="1">
    <citation type="journal article" date="2002" name="Int. J. Oncol.">
        <title>Molecular cloning and characterization of WRCH2 on human chromosome 15q15.</title>
        <authorList>
            <person name="Katoh M."/>
        </authorList>
    </citation>
    <scope>NUCLEOTIDE SEQUENCE [MRNA]</scope>
    <scope>TISSUE SPECIFICITY</scope>
</reference>
<reference evidence="9" key="2">
    <citation type="journal article" date="2002" name="J. Cell Sci.">
        <title>The Rho GTPase family: a Racs to Wrchs story.</title>
        <authorList>
            <person name="Wherlock M."/>
            <person name="Mellor H."/>
        </authorList>
    </citation>
    <scope>NUCLEOTIDE SEQUENCE [MRNA]</scope>
</reference>
<reference evidence="11" key="3">
    <citation type="submission" date="2005-07" db="EMBL/GenBank/DDBJ databases">
        <authorList>
            <person name="Mural R.J."/>
            <person name="Istrail S."/>
            <person name="Sutton G.G."/>
            <person name="Florea L."/>
            <person name="Halpern A.L."/>
            <person name="Mobarry C.M."/>
            <person name="Lippert R."/>
            <person name="Walenz B."/>
            <person name="Shatkay H."/>
            <person name="Dew I."/>
            <person name="Miller J.R."/>
            <person name="Flanigan M.J."/>
            <person name="Edwards N.J."/>
            <person name="Bolanos R."/>
            <person name="Fasulo D."/>
            <person name="Halldorsson B.V."/>
            <person name="Hannenhalli S."/>
            <person name="Turner R."/>
            <person name="Yooseph S."/>
            <person name="Lu F."/>
            <person name="Nusskern D.R."/>
            <person name="Shue B.C."/>
            <person name="Zheng X.H."/>
            <person name="Zhong F."/>
            <person name="Delcher A.L."/>
            <person name="Huson D.H."/>
            <person name="Kravitz S.A."/>
            <person name="Mouchard L."/>
            <person name="Reinert K."/>
            <person name="Remington K.A."/>
            <person name="Clark A.G."/>
            <person name="Waterman M.S."/>
            <person name="Eichler E.E."/>
            <person name="Adams M.D."/>
            <person name="Hunkapiller M.W."/>
            <person name="Myers E.W."/>
            <person name="Venter J.C."/>
        </authorList>
    </citation>
    <scope>NUCLEOTIDE SEQUENCE [LARGE SCALE GENOMIC DNA]</scope>
</reference>
<reference evidence="7" key="4">
    <citation type="journal article" date="2004" name="Genome Res.">
        <title>The status, quality, and expansion of the NIH full-length cDNA project: the Mammalian Gene Collection (MGC).</title>
        <authorList>
            <consortium name="The MGC Project Team"/>
        </authorList>
    </citation>
    <scope>NUCLEOTIDE SEQUENCE [LARGE SCALE MRNA]</scope>
    <source>
        <tissue evidence="7">Brain cortex</tissue>
        <tissue evidence="8">Cervix</tissue>
    </source>
</reference>
<reference key="5">
    <citation type="journal article" date="2013" name="J. Proteome Res.">
        <title>Toward a comprehensive characterization of a human cancer cell phosphoproteome.</title>
        <authorList>
            <person name="Zhou H."/>
            <person name="Di Palma S."/>
            <person name="Preisinger C."/>
            <person name="Peng M."/>
            <person name="Polat A.N."/>
            <person name="Heck A.J."/>
            <person name="Mohammed S."/>
        </authorList>
    </citation>
    <scope>PHOSPHORYLATION [LARGE SCALE ANALYSIS] AT SER-25</scope>
    <scope>IDENTIFICATION BY MASS SPECTROMETRY [LARGE SCALE ANALYSIS]</scope>
    <source>
        <tissue>Cervix carcinoma</tissue>
    </source>
</reference>
<feature type="chain" id="PRO_0000326438" description="Rho-related GTP-binding protein RhoV">
    <location>
        <begin position="1"/>
        <end position="236"/>
    </location>
</feature>
<feature type="region of interest" description="Disordered" evidence="4">
    <location>
        <begin position="1"/>
        <end position="27"/>
    </location>
</feature>
<feature type="compositionally biased region" description="Pro residues" evidence="4">
    <location>
        <begin position="10"/>
        <end position="20"/>
    </location>
</feature>
<feature type="binding site" evidence="3">
    <location>
        <begin position="38"/>
        <end position="45"/>
    </location>
    <ligand>
        <name>GTP</name>
        <dbReference type="ChEBI" id="CHEBI:37565"/>
    </ligand>
</feature>
<feature type="binding site" evidence="2">
    <location>
        <begin position="85"/>
        <end position="89"/>
    </location>
    <ligand>
        <name>GTP</name>
        <dbReference type="ChEBI" id="CHEBI:37565"/>
    </ligand>
</feature>
<feature type="binding site" evidence="1">
    <location>
        <begin position="143"/>
        <end position="146"/>
    </location>
    <ligand>
        <name>GTP</name>
        <dbReference type="ChEBI" id="CHEBI:37565"/>
    </ligand>
</feature>
<feature type="modified residue" description="Phosphoserine" evidence="13">
    <location>
        <position position="25"/>
    </location>
</feature>
<feature type="lipid moiety-binding region" description="S-palmitoyl cysteine" evidence="2">
    <location>
        <position position="234"/>
    </location>
</feature>
<feature type="sequence conflict" description="In Ref. 1; BAB86363." evidence="6" ref="1">
    <original>K</original>
    <variation>R</variation>
    <location>
        <position position="177"/>
    </location>
</feature>
<organism>
    <name type="scientific">Homo sapiens</name>
    <name type="common">Human</name>
    <dbReference type="NCBI Taxonomy" id="9606"/>
    <lineage>
        <taxon>Eukaryota</taxon>
        <taxon>Metazoa</taxon>
        <taxon>Chordata</taxon>
        <taxon>Craniata</taxon>
        <taxon>Vertebrata</taxon>
        <taxon>Euteleostomi</taxon>
        <taxon>Mammalia</taxon>
        <taxon>Eutheria</taxon>
        <taxon>Euarchontoglires</taxon>
        <taxon>Primates</taxon>
        <taxon>Haplorrhini</taxon>
        <taxon>Catarrhini</taxon>
        <taxon>Hominidae</taxon>
        <taxon>Homo</taxon>
    </lineage>
</organism>
<protein>
    <recommendedName>
        <fullName>Rho-related GTP-binding protein RhoV</fullName>
    </recommendedName>
    <alternativeName>
        <fullName>CDC42-like GTPase 2</fullName>
    </alternativeName>
    <alternativeName>
        <fullName>GTP-binding protein-like 2</fullName>
    </alternativeName>
    <alternativeName>
        <fullName>Rho GTPase-like protein ARHV</fullName>
    </alternativeName>
    <alternativeName>
        <fullName>Wnt-1 responsive Cdc42 homolog 2</fullName>
        <shortName>WRCH-2</shortName>
    </alternativeName>
</protein>
<accession>Q96L33</accession>
<accession>Q2KHQ5</accession>
<accession>Q8TDW6</accession>
<gene>
    <name evidence="12" type="primary">RHOV</name>
    <name evidence="10" type="synonym">ARHV</name>
    <name evidence="10" type="synonym">WRCH2</name>
</gene>
<name>RHOV_HUMAN</name>
<dbReference type="EMBL" id="AB079131">
    <property type="protein sequence ID" value="BAB86363.1"/>
    <property type="molecule type" value="mRNA"/>
</dbReference>
<dbReference type="EMBL" id="AY059636">
    <property type="protein sequence ID" value="AAL17966.1"/>
    <property type="molecule type" value="mRNA"/>
</dbReference>
<dbReference type="EMBL" id="CH471125">
    <property type="protein sequence ID" value="EAW92459.1"/>
    <property type="molecule type" value="Genomic_DNA"/>
</dbReference>
<dbReference type="EMBL" id="BC105020">
    <property type="protein sequence ID" value="AAI05021.1"/>
    <property type="molecule type" value="mRNA"/>
</dbReference>
<dbReference type="EMBL" id="BC105022">
    <property type="protein sequence ID" value="AAI05023.1"/>
    <property type="molecule type" value="mRNA"/>
</dbReference>
<dbReference type="EMBL" id="BC112945">
    <property type="protein sequence ID" value="AAI12946.2"/>
    <property type="molecule type" value="mRNA"/>
</dbReference>
<dbReference type="CCDS" id="CCDS10068.1"/>
<dbReference type="RefSeq" id="NP_598378.3">
    <property type="nucleotide sequence ID" value="NM_133639.3"/>
</dbReference>
<dbReference type="SMR" id="Q96L33"/>
<dbReference type="BioGRID" id="128110">
    <property type="interactions" value="242"/>
</dbReference>
<dbReference type="FunCoup" id="Q96L33">
    <property type="interactions" value="880"/>
</dbReference>
<dbReference type="IntAct" id="Q96L33">
    <property type="interactions" value="2"/>
</dbReference>
<dbReference type="MINT" id="Q96L33"/>
<dbReference type="STRING" id="9606.ENSP00000220507"/>
<dbReference type="iPTMnet" id="Q96L33"/>
<dbReference type="PhosphoSitePlus" id="Q96L33"/>
<dbReference type="BioMuta" id="RHOV"/>
<dbReference type="DMDM" id="74724228"/>
<dbReference type="jPOST" id="Q96L33"/>
<dbReference type="MassIVE" id="Q96L33"/>
<dbReference type="PaxDb" id="9606-ENSP00000220507"/>
<dbReference type="PeptideAtlas" id="Q96L33"/>
<dbReference type="ProteomicsDB" id="77144"/>
<dbReference type="Antibodypedia" id="23194">
    <property type="antibodies" value="23 antibodies from 11 providers"/>
</dbReference>
<dbReference type="DNASU" id="171177"/>
<dbReference type="Ensembl" id="ENST00000220507.5">
    <property type="protein sequence ID" value="ENSP00000220507.4"/>
    <property type="gene ID" value="ENSG00000104140.7"/>
</dbReference>
<dbReference type="GeneID" id="171177"/>
<dbReference type="KEGG" id="hsa:171177"/>
<dbReference type="MANE-Select" id="ENST00000220507.5">
    <property type="protein sequence ID" value="ENSP00000220507.4"/>
    <property type="RefSeq nucleotide sequence ID" value="NM_133639.4"/>
    <property type="RefSeq protein sequence ID" value="NP_598378.3"/>
</dbReference>
<dbReference type="UCSC" id="uc001znd.3">
    <property type="organism name" value="human"/>
</dbReference>
<dbReference type="AGR" id="HGNC:18313"/>
<dbReference type="CTD" id="171177"/>
<dbReference type="DisGeNET" id="171177"/>
<dbReference type="GeneCards" id="RHOV"/>
<dbReference type="HGNC" id="HGNC:18313">
    <property type="gene designation" value="RHOV"/>
</dbReference>
<dbReference type="HPA" id="ENSG00000104140">
    <property type="expression patterns" value="Tissue enhanced (esophagus, skin, vagina)"/>
</dbReference>
<dbReference type="MIM" id="620101">
    <property type="type" value="gene"/>
</dbReference>
<dbReference type="neXtProt" id="NX_Q96L33"/>
<dbReference type="OpenTargets" id="ENSG00000104140"/>
<dbReference type="PharmGKB" id="PA38313"/>
<dbReference type="VEuPathDB" id="HostDB:ENSG00000104140"/>
<dbReference type="eggNOG" id="KOG0393">
    <property type="taxonomic scope" value="Eukaryota"/>
</dbReference>
<dbReference type="GeneTree" id="ENSGT00940000157624"/>
<dbReference type="HOGENOM" id="CLU_041217_21_7_1"/>
<dbReference type="InParanoid" id="Q96L33"/>
<dbReference type="OMA" id="TPELGIK"/>
<dbReference type="OrthoDB" id="8830751at2759"/>
<dbReference type="PAN-GO" id="Q96L33">
    <property type="GO annotations" value="6 GO annotations based on evolutionary models"/>
</dbReference>
<dbReference type="PhylomeDB" id="Q96L33"/>
<dbReference type="TreeFam" id="TF321839"/>
<dbReference type="PathwayCommons" id="Q96L33"/>
<dbReference type="Reactome" id="R-HSA-9013424">
    <property type="pathway name" value="RHOV GTPase cycle"/>
</dbReference>
<dbReference type="SignaLink" id="Q96L33"/>
<dbReference type="BioGRID-ORCS" id="171177">
    <property type="hits" value="14 hits in 1155 CRISPR screens"/>
</dbReference>
<dbReference type="ChiTaRS" id="RHOV">
    <property type="organism name" value="human"/>
</dbReference>
<dbReference type="GenomeRNAi" id="171177"/>
<dbReference type="Pharos" id="Q96L33">
    <property type="development level" value="Tbio"/>
</dbReference>
<dbReference type="PRO" id="PR:Q96L33"/>
<dbReference type="Proteomes" id="UP000005640">
    <property type="component" value="Chromosome 15"/>
</dbReference>
<dbReference type="RNAct" id="Q96L33">
    <property type="molecule type" value="protein"/>
</dbReference>
<dbReference type="Bgee" id="ENSG00000104140">
    <property type="expression patterns" value="Expressed in lower esophagus mucosa and 150 other cell types or tissues"/>
</dbReference>
<dbReference type="ExpressionAtlas" id="Q96L33">
    <property type="expression patterns" value="baseline and differential"/>
</dbReference>
<dbReference type="GO" id="GO:0010008">
    <property type="term" value="C:endosome membrane"/>
    <property type="evidence" value="ECO:0007669"/>
    <property type="project" value="UniProtKB-SubCell"/>
</dbReference>
<dbReference type="GO" id="GO:0005886">
    <property type="term" value="C:plasma membrane"/>
    <property type="evidence" value="ECO:0000318"/>
    <property type="project" value="GO_Central"/>
</dbReference>
<dbReference type="GO" id="GO:0005525">
    <property type="term" value="F:GTP binding"/>
    <property type="evidence" value="ECO:0000318"/>
    <property type="project" value="GO_Central"/>
</dbReference>
<dbReference type="GO" id="GO:0003924">
    <property type="term" value="F:GTPase activity"/>
    <property type="evidence" value="ECO:0000318"/>
    <property type="project" value="GO_Central"/>
</dbReference>
<dbReference type="GO" id="GO:0046872">
    <property type="term" value="F:metal ion binding"/>
    <property type="evidence" value="ECO:0007669"/>
    <property type="project" value="UniProtKB-KW"/>
</dbReference>
<dbReference type="GO" id="GO:0019901">
    <property type="term" value="F:protein kinase binding"/>
    <property type="evidence" value="ECO:0000318"/>
    <property type="project" value="GO_Central"/>
</dbReference>
<dbReference type="GO" id="GO:0007015">
    <property type="term" value="P:actin filament organization"/>
    <property type="evidence" value="ECO:0000318"/>
    <property type="project" value="GO_Central"/>
</dbReference>
<dbReference type="GO" id="GO:0006897">
    <property type="term" value="P:endocytosis"/>
    <property type="evidence" value="ECO:0000318"/>
    <property type="project" value="GO_Central"/>
</dbReference>
<dbReference type="GO" id="GO:0030010">
    <property type="term" value="P:establishment of cell polarity"/>
    <property type="evidence" value="ECO:0000318"/>
    <property type="project" value="GO_Central"/>
</dbReference>
<dbReference type="GO" id="GO:0007165">
    <property type="term" value="P:signal transduction"/>
    <property type="evidence" value="ECO:0000318"/>
    <property type="project" value="GO_Central"/>
</dbReference>
<dbReference type="GO" id="GO:0007264">
    <property type="term" value="P:small GTPase-mediated signal transduction"/>
    <property type="evidence" value="ECO:0007669"/>
    <property type="project" value="InterPro"/>
</dbReference>
<dbReference type="CDD" id="cd04130">
    <property type="entry name" value="Wrch_1"/>
    <property type="match status" value="1"/>
</dbReference>
<dbReference type="FunFam" id="3.40.50.300:FF:000561">
    <property type="entry name" value="rho-related GTP-binding protein RhoV"/>
    <property type="match status" value="1"/>
</dbReference>
<dbReference type="Gene3D" id="3.40.50.300">
    <property type="entry name" value="P-loop containing nucleotide triphosphate hydrolases"/>
    <property type="match status" value="1"/>
</dbReference>
<dbReference type="InterPro" id="IPR027417">
    <property type="entry name" value="P-loop_NTPase"/>
</dbReference>
<dbReference type="InterPro" id="IPR005225">
    <property type="entry name" value="Small_GTP-bd"/>
</dbReference>
<dbReference type="InterPro" id="IPR001806">
    <property type="entry name" value="Small_GTPase"/>
</dbReference>
<dbReference type="InterPro" id="IPR003578">
    <property type="entry name" value="Small_GTPase_Rho"/>
</dbReference>
<dbReference type="NCBIfam" id="TIGR00231">
    <property type="entry name" value="small_GTP"/>
    <property type="match status" value="1"/>
</dbReference>
<dbReference type="PANTHER" id="PTHR24072">
    <property type="entry name" value="RHO FAMILY GTPASE"/>
    <property type="match status" value="1"/>
</dbReference>
<dbReference type="Pfam" id="PF00071">
    <property type="entry name" value="Ras"/>
    <property type="match status" value="1"/>
</dbReference>
<dbReference type="PRINTS" id="PR00449">
    <property type="entry name" value="RASTRNSFRMNG"/>
</dbReference>
<dbReference type="SMART" id="SM00175">
    <property type="entry name" value="RAB"/>
    <property type="match status" value="1"/>
</dbReference>
<dbReference type="SMART" id="SM00173">
    <property type="entry name" value="RAS"/>
    <property type="match status" value="1"/>
</dbReference>
<dbReference type="SMART" id="SM00174">
    <property type="entry name" value="RHO"/>
    <property type="match status" value="1"/>
</dbReference>
<dbReference type="SUPFAM" id="SSF52540">
    <property type="entry name" value="P-loop containing nucleoside triphosphate hydrolases"/>
    <property type="match status" value="1"/>
</dbReference>
<dbReference type="PROSITE" id="PS51420">
    <property type="entry name" value="RHO"/>
    <property type="match status" value="1"/>
</dbReference>
<comment type="function">
    <text evidence="3">Plays a role in the control of the actin cytoskeleton via activation of the JNK pathway.</text>
</comment>
<comment type="cofactor">
    <cofactor evidence="2">
        <name>Mg(2+)</name>
        <dbReference type="ChEBI" id="CHEBI:18420"/>
    </cofactor>
</comment>
<comment type="subunit">
    <text evidence="3">Interacts with PAK2.</text>
</comment>
<comment type="interaction">
    <interactant intactId="EBI-8538631">
        <id>Q96L33</id>
    </interactant>
    <interactant intactId="EBI-713635">
        <id>O43639</id>
        <label>NCK2</label>
    </interactant>
    <organismsDiffer>false</organismsDiffer>
    <experiments>4</experiments>
</comment>
<comment type="interaction">
    <interactant intactId="EBI-8538631">
        <id>Q96L33</id>
    </interactant>
    <interactant intactId="EBI-1053685">
        <id>Q9NQU5</id>
        <label>PAK6</label>
    </interactant>
    <organismsDiffer>false</organismsDiffer>
    <experiments>3</experiments>
</comment>
<comment type="subcellular location">
    <subcellularLocation>
        <location evidence="3">Cell membrane</location>
        <topology evidence="3">Lipid-anchor</topology>
        <orientation evidence="3">Cytoplasmic side</orientation>
    </subcellularLocation>
    <subcellularLocation>
        <location evidence="3">Endosome membrane</location>
        <topology evidence="3">Lipid-anchor</topology>
        <orientation evidence="3">Cytoplasmic side</orientation>
    </subcellularLocation>
    <text evidence="3">Treatment with TNF activates endosomal but not plasma membrane RHOV.</text>
</comment>
<comment type="tissue specificity">
    <text evidence="5">Highly expressed in pancreas, placenta, and fetal brain.</text>
</comment>
<comment type="similarity">
    <text evidence="3">Belongs to the small GTPase superfamily. Rho family.</text>
</comment>
<sequence>MPPRELSEAEPPPLRAPTPPPRRRSAPPELGIKCVLVGDGAVGKSSLIVSYTCNGYPARYRPTALDTFSVQVLVDGAPVRIELWDTAGQEDFDRLRSLCYPDTDVFLACFSVVQPSSFQNITEKWLPEIRTHNPQAPVLLVGTQADLRDDVNVLIQLDQGGREGPVPQPQAQGLAEKIRACCYLECSALTQKNLKEVFDSAILSAIEHKARLEKKLNAKGVRTLSRCRWKKFFCFV</sequence>
<evidence type="ECO:0000250" key="1">
    <source>
        <dbReference type="UniProtKB" id="P61586"/>
    </source>
</evidence>
<evidence type="ECO:0000250" key="2">
    <source>
        <dbReference type="UniProtKB" id="Q7L0Q8"/>
    </source>
</evidence>
<evidence type="ECO:0000250" key="3">
    <source>
        <dbReference type="UniProtKB" id="Q9Z1Y0"/>
    </source>
</evidence>
<evidence type="ECO:0000256" key="4">
    <source>
        <dbReference type="SAM" id="MobiDB-lite"/>
    </source>
</evidence>
<evidence type="ECO:0000269" key="5">
    <source>
    </source>
</evidence>
<evidence type="ECO:0000305" key="6"/>
<evidence type="ECO:0000312" key="7">
    <source>
        <dbReference type="EMBL" id="AAI05021.1"/>
    </source>
</evidence>
<evidence type="ECO:0000312" key="8">
    <source>
        <dbReference type="EMBL" id="AAI12946.2"/>
    </source>
</evidence>
<evidence type="ECO:0000312" key="9">
    <source>
        <dbReference type="EMBL" id="AAL17966.1"/>
    </source>
</evidence>
<evidence type="ECO:0000312" key="10">
    <source>
        <dbReference type="EMBL" id="BAB86363.1"/>
    </source>
</evidence>
<evidence type="ECO:0000312" key="11">
    <source>
        <dbReference type="EMBL" id="EAW92459.1"/>
    </source>
</evidence>
<evidence type="ECO:0000312" key="12">
    <source>
        <dbReference type="HGNC" id="HGNC:18313"/>
    </source>
</evidence>
<evidence type="ECO:0007744" key="13">
    <source>
    </source>
</evidence>
<proteinExistence type="evidence at protein level"/>